<feature type="chain" id="PRO_0000112477" description="N-acetyl-gamma-glutamyl-phosphate reductase">
    <location>
        <begin position="1"/>
        <end position="316"/>
    </location>
</feature>
<feature type="active site" evidence="1">
    <location>
        <position position="136"/>
    </location>
</feature>
<protein>
    <recommendedName>
        <fullName evidence="1">N-acetyl-gamma-glutamyl-phosphate reductase</fullName>
        <shortName evidence="1">AGPR</shortName>
        <ecNumber evidence="1">1.2.1.38</ecNumber>
    </recommendedName>
    <alternativeName>
        <fullName evidence="1">N-acetyl-glutamate semialdehyde dehydrogenase</fullName>
        <shortName evidence="1">NAGSA dehydrogenase</shortName>
    </alternativeName>
</protein>
<evidence type="ECO:0000255" key="1">
    <source>
        <dbReference type="HAMAP-Rule" id="MF_00150"/>
    </source>
</evidence>
<comment type="function">
    <text evidence="1">Catalyzes the NADPH-dependent reduction of N-acetyl-5-glutamyl phosphate to yield N-acetyl-L-glutamate 5-semialdehyde.</text>
</comment>
<comment type="catalytic activity">
    <reaction evidence="1">
        <text>N-acetyl-L-glutamate 5-semialdehyde + phosphate + NADP(+) = N-acetyl-L-glutamyl 5-phosphate + NADPH + H(+)</text>
        <dbReference type="Rhea" id="RHEA:21588"/>
        <dbReference type="ChEBI" id="CHEBI:15378"/>
        <dbReference type="ChEBI" id="CHEBI:29123"/>
        <dbReference type="ChEBI" id="CHEBI:43474"/>
        <dbReference type="ChEBI" id="CHEBI:57783"/>
        <dbReference type="ChEBI" id="CHEBI:57936"/>
        <dbReference type="ChEBI" id="CHEBI:58349"/>
        <dbReference type="EC" id="1.2.1.38"/>
    </reaction>
</comment>
<comment type="pathway">
    <text evidence="1">Amino-acid biosynthesis; L-arginine biosynthesis; N(2)-acetyl-L-ornithine from L-glutamate: step 3/4.</text>
</comment>
<comment type="subcellular location">
    <subcellularLocation>
        <location evidence="1">Cytoplasm</location>
    </subcellularLocation>
</comment>
<comment type="similarity">
    <text evidence="1">Belongs to the NAGSA dehydrogenase family. Type 1 subfamily.</text>
</comment>
<name>ARGC_XANCP</name>
<organism>
    <name type="scientific">Xanthomonas campestris pv. campestris (strain ATCC 33913 / DSM 3586 / NCPPB 528 / LMG 568 / P 25)</name>
    <dbReference type="NCBI Taxonomy" id="190485"/>
    <lineage>
        <taxon>Bacteria</taxon>
        <taxon>Pseudomonadati</taxon>
        <taxon>Pseudomonadota</taxon>
        <taxon>Gammaproteobacteria</taxon>
        <taxon>Lysobacterales</taxon>
        <taxon>Lysobacteraceae</taxon>
        <taxon>Xanthomonas</taxon>
    </lineage>
</organism>
<gene>
    <name evidence="1" type="primary">argC</name>
    <name type="ordered locus">XCC2243</name>
</gene>
<proteinExistence type="inferred from homology"/>
<keyword id="KW-0028">Amino-acid biosynthesis</keyword>
<keyword id="KW-0055">Arginine biosynthesis</keyword>
<keyword id="KW-0963">Cytoplasm</keyword>
<keyword id="KW-0521">NADP</keyword>
<keyword id="KW-0560">Oxidoreductase</keyword>
<keyword id="KW-1185">Reference proteome</keyword>
<reference key="1">
    <citation type="journal article" date="2002" name="Nature">
        <title>Comparison of the genomes of two Xanthomonas pathogens with differing host specificities.</title>
        <authorList>
            <person name="da Silva A.C.R."/>
            <person name="Ferro J.A."/>
            <person name="Reinach F.C."/>
            <person name="Farah C.S."/>
            <person name="Furlan L.R."/>
            <person name="Quaggio R.B."/>
            <person name="Monteiro-Vitorello C.B."/>
            <person name="Van Sluys M.A."/>
            <person name="Almeida N.F. Jr."/>
            <person name="Alves L.M.C."/>
            <person name="do Amaral A.M."/>
            <person name="Bertolini M.C."/>
            <person name="Camargo L.E.A."/>
            <person name="Camarotte G."/>
            <person name="Cannavan F."/>
            <person name="Cardozo J."/>
            <person name="Chambergo F."/>
            <person name="Ciapina L.P."/>
            <person name="Cicarelli R.M.B."/>
            <person name="Coutinho L.L."/>
            <person name="Cursino-Santos J.R."/>
            <person name="El-Dorry H."/>
            <person name="Faria J.B."/>
            <person name="Ferreira A.J.S."/>
            <person name="Ferreira R.C.C."/>
            <person name="Ferro M.I.T."/>
            <person name="Formighieri E.F."/>
            <person name="Franco M.C."/>
            <person name="Greggio C.C."/>
            <person name="Gruber A."/>
            <person name="Katsuyama A.M."/>
            <person name="Kishi L.T."/>
            <person name="Leite R.P."/>
            <person name="Lemos E.G.M."/>
            <person name="Lemos M.V.F."/>
            <person name="Locali E.C."/>
            <person name="Machado M.A."/>
            <person name="Madeira A.M.B.N."/>
            <person name="Martinez-Rossi N.M."/>
            <person name="Martins E.C."/>
            <person name="Meidanis J."/>
            <person name="Menck C.F.M."/>
            <person name="Miyaki C.Y."/>
            <person name="Moon D.H."/>
            <person name="Moreira L.M."/>
            <person name="Novo M.T.M."/>
            <person name="Okura V.K."/>
            <person name="Oliveira M.C."/>
            <person name="Oliveira V.R."/>
            <person name="Pereira H.A."/>
            <person name="Rossi A."/>
            <person name="Sena J.A.D."/>
            <person name="Silva C."/>
            <person name="de Souza R.F."/>
            <person name="Spinola L.A.F."/>
            <person name="Takita M.A."/>
            <person name="Tamura R.E."/>
            <person name="Teixeira E.C."/>
            <person name="Tezza R.I.D."/>
            <person name="Trindade dos Santos M."/>
            <person name="Truffi D."/>
            <person name="Tsai S.M."/>
            <person name="White F.F."/>
            <person name="Setubal J.C."/>
            <person name="Kitajima J.P."/>
        </authorList>
    </citation>
    <scope>NUCLEOTIDE SEQUENCE [LARGE SCALE GENOMIC DNA]</scope>
    <source>
        <strain>ATCC 33913 / DSM 3586 / NCPPB 528 / LMG 568 / P 25</strain>
    </source>
</reference>
<accession>Q8P8J8</accession>
<dbReference type="EC" id="1.2.1.38" evidence="1"/>
<dbReference type="EMBL" id="AE008922">
    <property type="protein sequence ID" value="AAM41522.1"/>
    <property type="molecule type" value="Genomic_DNA"/>
</dbReference>
<dbReference type="RefSeq" id="NP_637598.1">
    <property type="nucleotide sequence ID" value="NC_003902.1"/>
</dbReference>
<dbReference type="RefSeq" id="WP_011037387.1">
    <property type="nucleotide sequence ID" value="NC_003902.1"/>
</dbReference>
<dbReference type="SMR" id="Q8P8J8"/>
<dbReference type="STRING" id="190485.XCC2243"/>
<dbReference type="EnsemblBacteria" id="AAM41522">
    <property type="protein sequence ID" value="AAM41522"/>
    <property type="gene ID" value="XCC2243"/>
</dbReference>
<dbReference type="KEGG" id="xcc:XCC2243"/>
<dbReference type="PATRIC" id="fig|190485.4.peg.2393"/>
<dbReference type="eggNOG" id="COG0002">
    <property type="taxonomic scope" value="Bacteria"/>
</dbReference>
<dbReference type="HOGENOM" id="CLU_006384_3_0_6"/>
<dbReference type="OrthoDB" id="9801289at2"/>
<dbReference type="UniPathway" id="UPA00068">
    <property type="reaction ID" value="UER00108"/>
</dbReference>
<dbReference type="Proteomes" id="UP000001010">
    <property type="component" value="Chromosome"/>
</dbReference>
<dbReference type="GO" id="GO:0005737">
    <property type="term" value="C:cytoplasm"/>
    <property type="evidence" value="ECO:0007669"/>
    <property type="project" value="UniProtKB-SubCell"/>
</dbReference>
<dbReference type="GO" id="GO:0003942">
    <property type="term" value="F:N-acetyl-gamma-glutamyl-phosphate reductase activity"/>
    <property type="evidence" value="ECO:0007669"/>
    <property type="project" value="UniProtKB-UniRule"/>
</dbReference>
<dbReference type="GO" id="GO:0051287">
    <property type="term" value="F:NAD binding"/>
    <property type="evidence" value="ECO:0007669"/>
    <property type="project" value="InterPro"/>
</dbReference>
<dbReference type="GO" id="GO:0070401">
    <property type="term" value="F:NADP+ binding"/>
    <property type="evidence" value="ECO:0007669"/>
    <property type="project" value="InterPro"/>
</dbReference>
<dbReference type="GO" id="GO:0006526">
    <property type="term" value="P:L-arginine biosynthetic process"/>
    <property type="evidence" value="ECO:0007669"/>
    <property type="project" value="UniProtKB-UniRule"/>
</dbReference>
<dbReference type="CDD" id="cd23936">
    <property type="entry name" value="AGPR_C_ARG5_6_like"/>
    <property type="match status" value="1"/>
</dbReference>
<dbReference type="CDD" id="cd24149">
    <property type="entry name" value="AGPR_N_ARG5_6_like"/>
    <property type="match status" value="1"/>
</dbReference>
<dbReference type="Gene3D" id="3.30.360.10">
    <property type="entry name" value="Dihydrodipicolinate Reductase, domain 2"/>
    <property type="match status" value="1"/>
</dbReference>
<dbReference type="Gene3D" id="3.40.50.720">
    <property type="entry name" value="NAD(P)-binding Rossmann-like Domain"/>
    <property type="match status" value="1"/>
</dbReference>
<dbReference type="HAMAP" id="MF_00150">
    <property type="entry name" value="ArgC_type1"/>
    <property type="match status" value="1"/>
</dbReference>
<dbReference type="InterPro" id="IPR023013">
    <property type="entry name" value="AGPR_AS"/>
</dbReference>
<dbReference type="InterPro" id="IPR000706">
    <property type="entry name" value="AGPR_type-1"/>
</dbReference>
<dbReference type="InterPro" id="IPR036291">
    <property type="entry name" value="NAD(P)-bd_dom_sf"/>
</dbReference>
<dbReference type="InterPro" id="IPR050085">
    <property type="entry name" value="NAGSA_dehydrogenase"/>
</dbReference>
<dbReference type="InterPro" id="IPR000534">
    <property type="entry name" value="Semialdehyde_DH_NAD-bd"/>
</dbReference>
<dbReference type="NCBIfam" id="TIGR01850">
    <property type="entry name" value="argC"/>
    <property type="match status" value="1"/>
</dbReference>
<dbReference type="PANTHER" id="PTHR32338:SF10">
    <property type="entry name" value="N-ACETYL-GAMMA-GLUTAMYL-PHOSPHATE REDUCTASE, CHLOROPLASTIC-RELATED"/>
    <property type="match status" value="1"/>
</dbReference>
<dbReference type="PANTHER" id="PTHR32338">
    <property type="entry name" value="N-ACETYL-GAMMA-GLUTAMYL-PHOSPHATE REDUCTASE, CHLOROPLASTIC-RELATED-RELATED"/>
    <property type="match status" value="1"/>
</dbReference>
<dbReference type="Pfam" id="PF01118">
    <property type="entry name" value="Semialdhyde_dh"/>
    <property type="match status" value="1"/>
</dbReference>
<dbReference type="Pfam" id="PF22698">
    <property type="entry name" value="Semialdhyde_dhC_1"/>
    <property type="match status" value="1"/>
</dbReference>
<dbReference type="SMART" id="SM00859">
    <property type="entry name" value="Semialdhyde_dh"/>
    <property type="match status" value="1"/>
</dbReference>
<dbReference type="SUPFAM" id="SSF55347">
    <property type="entry name" value="Glyceraldehyde-3-phosphate dehydrogenase-like, C-terminal domain"/>
    <property type="match status" value="1"/>
</dbReference>
<dbReference type="SUPFAM" id="SSF51735">
    <property type="entry name" value="NAD(P)-binding Rossmann-fold domains"/>
    <property type="match status" value="1"/>
</dbReference>
<dbReference type="PROSITE" id="PS01224">
    <property type="entry name" value="ARGC"/>
    <property type="match status" value="1"/>
</dbReference>
<sequence>MTVQPTTIGIVGARGHTGAELIKLIAAHPQLQLVFVSSRELAGQRVAEHSDGYEGELRYESLDADAVAAKAADVVILALPNGKAEPFVAAIDASRPQTLLIDLSADYRFDPAWYYGLPELTRHTYAGQRRISNPGCYATAMQLAITPLREQLAGPPQCFGVSGYSGAGTTPSDKNNPALLADNLMPYALTNHMHEREVSAQLGVPVEFMPHVAPHFRGITMTVNLWLQQPLTREQIHARYLERYAHEPLIEIVDEAPWVSRIAGTQGVQIGGFTMAPGNKRVVVVATLDNLLKGAATQAMQNLNLALGWDELTAIG</sequence>